<gene>
    <name evidence="1" type="primary">mdtB</name>
    <name type="ordered locus">SeAg_B2257</name>
</gene>
<protein>
    <recommendedName>
        <fullName evidence="1">Multidrug resistance protein MdtB</fullName>
    </recommendedName>
    <alternativeName>
        <fullName evidence="1">Multidrug transporter MdtB</fullName>
    </alternativeName>
</protein>
<name>MDTB_SALA4</name>
<comment type="subunit">
    <text evidence="1">Part of a tripartite efflux system composed of MdtA, MdtB and MdtC. MdtB forms a heteromultimer with MdtC.</text>
</comment>
<comment type="subcellular location">
    <subcellularLocation>
        <location evidence="1">Cell inner membrane</location>
        <topology evidence="1">Multi-pass membrane protein</topology>
    </subcellularLocation>
</comment>
<comment type="similarity">
    <text evidence="1">Belongs to the resistance-nodulation-cell division (RND) (TC 2.A.6) family. MdtB subfamily.</text>
</comment>
<keyword id="KW-0997">Cell inner membrane</keyword>
<keyword id="KW-1003">Cell membrane</keyword>
<keyword id="KW-0472">Membrane</keyword>
<keyword id="KW-0812">Transmembrane</keyword>
<keyword id="KW-1133">Transmembrane helix</keyword>
<keyword id="KW-0813">Transport</keyword>
<sequence length="1040" mass="111823">MQVLPPGSTGGPSRLFILRPVATTLLMAAILLAGIIGYRFLPVAALPEVDYPTIQVVTLYPGASPDVMTSAVTAPLERQFGQMSGLKQMSSQSSGGASVVTLQFQLTLPLDVAEQEVQAAINAATNLLPSDLPNPPIYSKVNPADPPIMTLAVTSNAMPMTQVEDMVETRVAQKISQVSGVGLVTLAGGQRPAVRVKLNAQAVAALGLTSETVRTAITGANVNSAKGSLDGPERAVTLSANDQMQSADEYRRLIIAYQNGAPVRLGDVATVEQGAENSWLGAWANQAPAIVMNVQRQPGANIIATADSIRQMLPQLTESLPKSVKVTVLSDRTTNIRASVRDTQFELMLAIALVVMIIYLFLRNIPATIIPGVAVPLSLIGTFAVMVFLDFSINNLTLMALTIATGFVVDDAIVVIENISRYIEKGEKPLAAALKGAGEIGFTIISLTFSLIAVLIPLLFMGDIVGRLFREFAVTLAVAILISAVVSLTLTPMMCARMLSQQSLRKQNRFSRACERMFDRVIASYGRGLAKVLNHPWLTLSVAFATLLLSVMLWIVIPKGFFPVQDNGIIQGTLQAPQSSSYASMAQRQRQVAERILQDPAVQSLTTFVGVDGANPTLNSARLQINLKPLDARDDRVQQVISRLQTAVATIPGVALYLQPTQDLTIDTQVSRTQYQFTLQATTLDALSHWVPKLQNALQSLPQLSEVSSDWQDRGLAAWVNVDRDSASRLGISMADVDNALYNAFGQRLISTIYTQANQYRVVLEHNTASTPGLAALETIRLTSRDGGTVPLSAIARIEQRFAPLSINHLDQFPVTTFSFNVPEGYSLGDAVQAILDTEKTLALPADITTQFQGSTLAFQAALGSTVWLIVAAVVAMYIVLGVLYESFIHPITILSTLPTAGVGALLALIIAGSELDIIAIIGIILLIGIVKKNAIMMIDFALAAEREQGMSPRDAIFQACLLRFRPILMTTLAALLGALPLMLSTGVGAELRRPLGIAMVGGLLVSQVLTLFTTPVIYLLFDRLSLYVKSRFPRHKEEA</sequence>
<evidence type="ECO:0000255" key="1">
    <source>
        <dbReference type="HAMAP-Rule" id="MF_01423"/>
    </source>
</evidence>
<dbReference type="EMBL" id="CP001138">
    <property type="protein sequence ID" value="ACH48807.1"/>
    <property type="molecule type" value="Genomic_DNA"/>
</dbReference>
<dbReference type="RefSeq" id="WP_001197797.1">
    <property type="nucleotide sequence ID" value="NC_011149.1"/>
</dbReference>
<dbReference type="SMR" id="B5EXV7"/>
<dbReference type="KEGG" id="sea:SeAg_B2257"/>
<dbReference type="HOGENOM" id="CLU_002755_1_1_6"/>
<dbReference type="Proteomes" id="UP000008819">
    <property type="component" value="Chromosome"/>
</dbReference>
<dbReference type="GO" id="GO:0005886">
    <property type="term" value="C:plasma membrane"/>
    <property type="evidence" value="ECO:0007669"/>
    <property type="project" value="UniProtKB-SubCell"/>
</dbReference>
<dbReference type="GO" id="GO:0042910">
    <property type="term" value="F:xenobiotic transmembrane transporter activity"/>
    <property type="evidence" value="ECO:0007669"/>
    <property type="project" value="TreeGrafter"/>
</dbReference>
<dbReference type="FunFam" id="1.20.1640.10:FF:000001">
    <property type="entry name" value="Efflux pump membrane transporter"/>
    <property type="match status" value="1"/>
</dbReference>
<dbReference type="FunFam" id="3.30.70.1430:FF:000001">
    <property type="entry name" value="Efflux pump membrane transporter"/>
    <property type="match status" value="1"/>
</dbReference>
<dbReference type="FunFam" id="3.30.2090.10:FF:000003">
    <property type="entry name" value="Multidrug resistance protein MdtB"/>
    <property type="match status" value="1"/>
</dbReference>
<dbReference type="Gene3D" id="3.30.70.1430">
    <property type="entry name" value="Multidrug efflux transporter AcrB pore domain"/>
    <property type="match status" value="2"/>
</dbReference>
<dbReference type="Gene3D" id="3.30.70.1440">
    <property type="entry name" value="Multidrug efflux transporter AcrB pore domain"/>
    <property type="match status" value="1"/>
</dbReference>
<dbReference type="Gene3D" id="3.30.70.1320">
    <property type="entry name" value="Multidrug efflux transporter AcrB pore domain like"/>
    <property type="match status" value="1"/>
</dbReference>
<dbReference type="Gene3D" id="3.30.2090.10">
    <property type="entry name" value="Multidrug efflux transporter AcrB TolC docking domain, DN and DC subdomains"/>
    <property type="match status" value="2"/>
</dbReference>
<dbReference type="Gene3D" id="1.20.1640.10">
    <property type="entry name" value="Multidrug efflux transporter AcrB transmembrane domain"/>
    <property type="match status" value="2"/>
</dbReference>
<dbReference type="HAMAP" id="MF_01423">
    <property type="entry name" value="MdtB"/>
    <property type="match status" value="1"/>
</dbReference>
<dbReference type="InterPro" id="IPR027463">
    <property type="entry name" value="AcrB_DN_DC_subdom"/>
</dbReference>
<dbReference type="InterPro" id="IPR001036">
    <property type="entry name" value="Acrflvin-R"/>
</dbReference>
<dbReference type="InterPro" id="IPR022831">
    <property type="entry name" value="Multidrug-R_MdtB"/>
</dbReference>
<dbReference type="NCBIfam" id="NF007798">
    <property type="entry name" value="PRK10503.1"/>
    <property type="match status" value="1"/>
</dbReference>
<dbReference type="NCBIfam" id="NF033617">
    <property type="entry name" value="RND_permease_2"/>
    <property type="match status" value="1"/>
</dbReference>
<dbReference type="PANTHER" id="PTHR32063">
    <property type="match status" value="1"/>
</dbReference>
<dbReference type="PANTHER" id="PTHR32063:SF21">
    <property type="entry name" value="MULTIDRUG RESISTANCE PROTEIN MDTB"/>
    <property type="match status" value="1"/>
</dbReference>
<dbReference type="Pfam" id="PF00873">
    <property type="entry name" value="ACR_tran"/>
    <property type="match status" value="1"/>
</dbReference>
<dbReference type="PRINTS" id="PR00702">
    <property type="entry name" value="ACRIFLAVINRP"/>
</dbReference>
<dbReference type="SUPFAM" id="SSF82693">
    <property type="entry name" value="Multidrug efflux transporter AcrB pore domain, PN1, PN2, PC1 and PC2 subdomains"/>
    <property type="match status" value="3"/>
</dbReference>
<dbReference type="SUPFAM" id="SSF82714">
    <property type="entry name" value="Multidrug efflux transporter AcrB TolC docking domain, DN and DC subdomains"/>
    <property type="match status" value="2"/>
</dbReference>
<dbReference type="SUPFAM" id="SSF82866">
    <property type="entry name" value="Multidrug efflux transporter AcrB transmembrane domain"/>
    <property type="match status" value="2"/>
</dbReference>
<accession>B5EXV7</accession>
<feature type="chain" id="PRO_1000145657" description="Multidrug resistance protein MdtB">
    <location>
        <begin position="1"/>
        <end position="1040"/>
    </location>
</feature>
<feature type="transmembrane region" description="Helical" evidence="1">
    <location>
        <begin position="25"/>
        <end position="45"/>
    </location>
</feature>
<feature type="transmembrane region" description="Helical" evidence="1">
    <location>
        <begin position="347"/>
        <end position="367"/>
    </location>
</feature>
<feature type="transmembrane region" description="Helical" evidence="1">
    <location>
        <begin position="369"/>
        <end position="389"/>
    </location>
</feature>
<feature type="transmembrane region" description="Helical" evidence="1">
    <location>
        <begin position="396"/>
        <end position="416"/>
    </location>
</feature>
<feature type="transmembrane region" description="Helical" evidence="1">
    <location>
        <begin position="440"/>
        <end position="460"/>
    </location>
</feature>
<feature type="transmembrane region" description="Helical" evidence="1">
    <location>
        <begin position="472"/>
        <end position="492"/>
    </location>
</feature>
<feature type="transmembrane region" description="Helical" evidence="1">
    <location>
        <begin position="537"/>
        <end position="557"/>
    </location>
</feature>
<feature type="transmembrane region" description="Helical" evidence="1">
    <location>
        <begin position="863"/>
        <end position="883"/>
    </location>
</feature>
<feature type="transmembrane region" description="Helical" evidence="1">
    <location>
        <begin position="888"/>
        <end position="908"/>
    </location>
</feature>
<feature type="transmembrane region" description="Helical" evidence="1">
    <location>
        <begin position="910"/>
        <end position="930"/>
    </location>
</feature>
<feature type="transmembrane region" description="Helical" evidence="1">
    <location>
        <begin position="968"/>
        <end position="988"/>
    </location>
</feature>
<feature type="transmembrane region" description="Helical" evidence="1">
    <location>
        <begin position="998"/>
        <end position="1018"/>
    </location>
</feature>
<proteinExistence type="inferred from homology"/>
<reference key="1">
    <citation type="journal article" date="2011" name="J. Bacteriol.">
        <title>Comparative genomics of 28 Salmonella enterica isolates: evidence for CRISPR-mediated adaptive sublineage evolution.</title>
        <authorList>
            <person name="Fricke W.F."/>
            <person name="Mammel M.K."/>
            <person name="McDermott P.F."/>
            <person name="Tartera C."/>
            <person name="White D.G."/>
            <person name="Leclerc J.E."/>
            <person name="Ravel J."/>
            <person name="Cebula T.A."/>
        </authorList>
    </citation>
    <scope>NUCLEOTIDE SEQUENCE [LARGE SCALE GENOMIC DNA]</scope>
    <source>
        <strain>SL483</strain>
    </source>
</reference>
<organism>
    <name type="scientific">Salmonella agona (strain SL483)</name>
    <dbReference type="NCBI Taxonomy" id="454166"/>
    <lineage>
        <taxon>Bacteria</taxon>
        <taxon>Pseudomonadati</taxon>
        <taxon>Pseudomonadota</taxon>
        <taxon>Gammaproteobacteria</taxon>
        <taxon>Enterobacterales</taxon>
        <taxon>Enterobacteriaceae</taxon>
        <taxon>Salmonella</taxon>
    </lineage>
</organism>